<evidence type="ECO:0000255" key="1">
    <source>
        <dbReference type="HAMAP-Rule" id="MF_00228"/>
    </source>
</evidence>
<evidence type="ECO:0000305" key="2"/>
<dbReference type="EC" id="2.7.1.50" evidence="1"/>
<dbReference type="EMBL" id="CP000880">
    <property type="protein sequence ID" value="ABX20675.1"/>
    <property type="status" value="ALT_INIT"/>
    <property type="molecule type" value="Genomic_DNA"/>
</dbReference>
<dbReference type="SMR" id="A9MKV9"/>
<dbReference type="STRING" id="41514.SARI_00752"/>
<dbReference type="KEGG" id="ses:SARI_00752"/>
<dbReference type="HOGENOM" id="CLU_019943_0_1_6"/>
<dbReference type="UniPathway" id="UPA00060">
    <property type="reaction ID" value="UER00139"/>
</dbReference>
<dbReference type="Proteomes" id="UP000002084">
    <property type="component" value="Chromosome"/>
</dbReference>
<dbReference type="GO" id="GO:0005524">
    <property type="term" value="F:ATP binding"/>
    <property type="evidence" value="ECO:0007669"/>
    <property type="project" value="UniProtKB-UniRule"/>
</dbReference>
<dbReference type="GO" id="GO:0004417">
    <property type="term" value="F:hydroxyethylthiazole kinase activity"/>
    <property type="evidence" value="ECO:0007669"/>
    <property type="project" value="UniProtKB-UniRule"/>
</dbReference>
<dbReference type="GO" id="GO:0000287">
    <property type="term" value="F:magnesium ion binding"/>
    <property type="evidence" value="ECO:0007669"/>
    <property type="project" value="UniProtKB-UniRule"/>
</dbReference>
<dbReference type="GO" id="GO:0009228">
    <property type="term" value="P:thiamine biosynthetic process"/>
    <property type="evidence" value="ECO:0007669"/>
    <property type="project" value="UniProtKB-KW"/>
</dbReference>
<dbReference type="GO" id="GO:0009229">
    <property type="term" value="P:thiamine diphosphate biosynthetic process"/>
    <property type="evidence" value="ECO:0007669"/>
    <property type="project" value="UniProtKB-UniRule"/>
</dbReference>
<dbReference type="CDD" id="cd01170">
    <property type="entry name" value="THZ_kinase"/>
    <property type="match status" value="1"/>
</dbReference>
<dbReference type="FunFam" id="3.40.1190.20:FF:000015">
    <property type="entry name" value="Hydroxyethylthiazole kinase"/>
    <property type="match status" value="1"/>
</dbReference>
<dbReference type="Gene3D" id="3.40.1190.20">
    <property type="match status" value="1"/>
</dbReference>
<dbReference type="HAMAP" id="MF_00228">
    <property type="entry name" value="Thz_kinase"/>
    <property type="match status" value="1"/>
</dbReference>
<dbReference type="InterPro" id="IPR000417">
    <property type="entry name" value="Hyethyz_kinase"/>
</dbReference>
<dbReference type="InterPro" id="IPR029056">
    <property type="entry name" value="Ribokinase-like"/>
</dbReference>
<dbReference type="NCBIfam" id="NF006830">
    <property type="entry name" value="PRK09355.1"/>
    <property type="match status" value="1"/>
</dbReference>
<dbReference type="NCBIfam" id="TIGR00694">
    <property type="entry name" value="thiM"/>
    <property type="match status" value="1"/>
</dbReference>
<dbReference type="Pfam" id="PF02110">
    <property type="entry name" value="HK"/>
    <property type="match status" value="1"/>
</dbReference>
<dbReference type="PIRSF" id="PIRSF000513">
    <property type="entry name" value="Thz_kinase"/>
    <property type="match status" value="1"/>
</dbReference>
<dbReference type="PRINTS" id="PR01099">
    <property type="entry name" value="HYETHTZKNASE"/>
</dbReference>
<dbReference type="SUPFAM" id="SSF53613">
    <property type="entry name" value="Ribokinase-like"/>
    <property type="match status" value="1"/>
</dbReference>
<protein>
    <recommendedName>
        <fullName evidence="1">Hydroxyethylthiazole kinase</fullName>
        <ecNumber evidence="1">2.7.1.50</ecNumber>
    </recommendedName>
    <alternativeName>
        <fullName evidence="1">4-methyl-5-beta-hydroxyethylthiazole kinase</fullName>
        <shortName evidence="1">TH kinase</shortName>
        <shortName evidence="1">Thz kinase</shortName>
    </alternativeName>
</protein>
<accession>A9MKV9</accession>
<comment type="function">
    <text evidence="1">Catalyzes the phosphorylation of the hydroxyl group of 4-methyl-5-beta-hydroxyethylthiazole (THZ).</text>
</comment>
<comment type="catalytic activity">
    <reaction evidence="1">
        <text>5-(2-hydroxyethyl)-4-methylthiazole + ATP = 4-methyl-5-(2-phosphooxyethyl)-thiazole + ADP + H(+)</text>
        <dbReference type="Rhea" id="RHEA:24212"/>
        <dbReference type="ChEBI" id="CHEBI:15378"/>
        <dbReference type="ChEBI" id="CHEBI:17957"/>
        <dbReference type="ChEBI" id="CHEBI:30616"/>
        <dbReference type="ChEBI" id="CHEBI:58296"/>
        <dbReference type="ChEBI" id="CHEBI:456216"/>
        <dbReference type="EC" id="2.7.1.50"/>
    </reaction>
</comment>
<comment type="cofactor">
    <cofactor evidence="1">
        <name>Mg(2+)</name>
        <dbReference type="ChEBI" id="CHEBI:18420"/>
    </cofactor>
</comment>
<comment type="pathway">
    <text evidence="1">Cofactor biosynthesis; thiamine diphosphate biosynthesis; 4-methyl-5-(2-phosphoethyl)-thiazole from 5-(2-hydroxyethyl)-4-methylthiazole: step 1/1.</text>
</comment>
<comment type="similarity">
    <text evidence="1">Belongs to the Thz kinase family.</text>
</comment>
<comment type="sequence caution" evidence="2">
    <conflict type="erroneous initiation">
        <sequence resource="EMBL-CDS" id="ABX20675"/>
    </conflict>
</comment>
<reference key="1">
    <citation type="submission" date="2007-11" db="EMBL/GenBank/DDBJ databases">
        <authorList>
            <consortium name="The Salmonella enterica serovar Arizonae Genome Sequencing Project"/>
            <person name="McClelland M."/>
            <person name="Sanderson E.K."/>
            <person name="Porwollik S."/>
            <person name="Spieth J."/>
            <person name="Clifton W.S."/>
            <person name="Fulton R."/>
            <person name="Chunyan W."/>
            <person name="Wollam A."/>
            <person name="Shah N."/>
            <person name="Pepin K."/>
            <person name="Bhonagiri V."/>
            <person name="Nash W."/>
            <person name="Johnson M."/>
            <person name="Thiruvilangam P."/>
            <person name="Wilson R."/>
        </authorList>
    </citation>
    <scope>NUCLEOTIDE SEQUENCE [LARGE SCALE GENOMIC DNA]</scope>
    <source>
        <strain>ATCC BAA-731 / CDC346-86 / RSK2980</strain>
    </source>
</reference>
<gene>
    <name evidence="1" type="primary">thiM</name>
    <name type="ordered locus">SARI_00752</name>
</gene>
<name>THIM_SALAR</name>
<feature type="chain" id="PRO_0000383895" description="Hydroxyethylthiazole kinase">
    <location>
        <begin position="1"/>
        <end position="265"/>
    </location>
</feature>
<feature type="binding site" evidence="1">
    <location>
        <position position="50"/>
    </location>
    <ligand>
        <name>substrate</name>
    </ligand>
</feature>
<feature type="binding site" evidence="1">
    <location>
        <position position="125"/>
    </location>
    <ligand>
        <name>ATP</name>
        <dbReference type="ChEBI" id="CHEBI:30616"/>
    </ligand>
</feature>
<feature type="binding site" evidence="1">
    <location>
        <position position="171"/>
    </location>
    <ligand>
        <name>ATP</name>
        <dbReference type="ChEBI" id="CHEBI:30616"/>
    </ligand>
</feature>
<feature type="binding site" evidence="1">
    <location>
        <position position="198"/>
    </location>
    <ligand>
        <name>substrate</name>
    </ligand>
</feature>
<keyword id="KW-0067">ATP-binding</keyword>
<keyword id="KW-0418">Kinase</keyword>
<keyword id="KW-0460">Magnesium</keyword>
<keyword id="KW-0479">Metal-binding</keyword>
<keyword id="KW-0547">Nucleotide-binding</keyword>
<keyword id="KW-1185">Reference proteome</keyword>
<keyword id="KW-0784">Thiamine biosynthesis</keyword>
<keyword id="KW-0808">Transferase</keyword>
<proteinExistence type="inferred from homology"/>
<organism>
    <name type="scientific">Salmonella arizonae (strain ATCC BAA-731 / CDC346-86 / RSK2980)</name>
    <dbReference type="NCBI Taxonomy" id="41514"/>
    <lineage>
        <taxon>Bacteria</taxon>
        <taxon>Pseudomonadati</taxon>
        <taxon>Pseudomonadota</taxon>
        <taxon>Gammaproteobacteria</taxon>
        <taxon>Enterobacterales</taxon>
        <taxon>Enterobacteriaceae</taxon>
        <taxon>Salmonella</taxon>
    </lineage>
</organism>
<sequence>MQPDLHCRTLAAHTLKHFRALSPLTHCMTNDVVQTFTANTLLALGASPAMVIDPAEARPFAAIANALLVNVGTLTASRADAMRAAVESAYDAKTPWTLDPVAVGALEFRRRFCLDLLSLRPAAIRGNASEILALAGMALGGRGVDTTEAALAALPAAQALARQIDCIVVVTGEIDYVTNGQRTLSIPGGDPLMTRIVGTGCALSAVVAASCALPGAALDNVASACCWMKLAGQAAAERSEGPGSFIPAFLDALYHLDVEAANATN</sequence>